<reference key="1">
    <citation type="journal article" date="2009" name="Appl. Environ. Microbiol.">
        <title>Metabolic versatility and indigenous origin of the archaeon Thermococcus sibiricus, isolated from a siberian oil reservoir, as revealed by genome analysis.</title>
        <authorList>
            <person name="Mardanov A.V."/>
            <person name="Ravin N.V."/>
            <person name="Svetlitchnyi V.A."/>
            <person name="Beletsky A.V."/>
            <person name="Miroshnichenko M.L."/>
            <person name="Bonch-Osmolovskaya E.A."/>
            <person name="Skryabin K.G."/>
        </authorList>
    </citation>
    <scope>NUCLEOTIDE SEQUENCE [LARGE SCALE GENOMIC DNA]</scope>
    <source>
        <strain>DSM 12597 / MM 739</strain>
    </source>
</reference>
<comment type="function">
    <text evidence="1">Component of the A-type ATP synthase that produces ATP from ADP in the presence of a proton gradient across the membrane.</text>
</comment>
<comment type="subunit">
    <text evidence="1">Has multiple subunits with at least A(3), B(3), C, D, E, F, H, I and proteolipid K(x).</text>
</comment>
<comment type="subcellular location">
    <subcellularLocation>
        <location evidence="1">Cell membrane</location>
        <topology evidence="1">Peripheral membrane protein</topology>
    </subcellularLocation>
</comment>
<comment type="similarity">
    <text evidence="1">Belongs to the V-ATPase D subunit family.</text>
</comment>
<sequence length="214" mass="25038">MTRILKVKPTRMELLRLKRRIKLAEKGHKILKEKQDALIMEFFTIYDEALALRREVNQKIAEAFEQLRLAEIDVGIVKLSEIALSVKSNKEIKIKRRNIMGVPVPLIEAEGFRRDPYERGYAFVSTSPKVDVTAETFEEVLELVTRLAEIEETLKRLAKEIEKTKRRVNALEYIIIPRMAETVKYISQHLDEMERENFFRLKRVKALLEAKAQG</sequence>
<proteinExistence type="inferred from homology"/>
<organism>
    <name type="scientific">Thermococcus sibiricus (strain DSM 12597 / MM 739)</name>
    <dbReference type="NCBI Taxonomy" id="604354"/>
    <lineage>
        <taxon>Archaea</taxon>
        <taxon>Methanobacteriati</taxon>
        <taxon>Methanobacteriota</taxon>
        <taxon>Thermococci</taxon>
        <taxon>Thermococcales</taxon>
        <taxon>Thermococcaceae</taxon>
        <taxon>Thermococcus</taxon>
    </lineage>
</organism>
<feature type="chain" id="PRO_1000209798" description="A-type ATP synthase subunit D">
    <location>
        <begin position="1"/>
        <end position="214"/>
    </location>
</feature>
<gene>
    <name evidence="1" type="primary">atpD</name>
    <name type="ordered locus">TSIB_1790</name>
</gene>
<accession>C6A5E6</accession>
<protein>
    <recommendedName>
        <fullName evidence="1">A-type ATP synthase subunit D</fullName>
    </recommendedName>
</protein>
<keyword id="KW-0066">ATP synthesis</keyword>
<keyword id="KW-1003">Cell membrane</keyword>
<keyword id="KW-0375">Hydrogen ion transport</keyword>
<keyword id="KW-0406">Ion transport</keyword>
<keyword id="KW-0472">Membrane</keyword>
<keyword id="KW-1185">Reference proteome</keyword>
<keyword id="KW-0813">Transport</keyword>
<name>AATD_THESM</name>
<evidence type="ECO:0000255" key="1">
    <source>
        <dbReference type="HAMAP-Rule" id="MF_00271"/>
    </source>
</evidence>
<dbReference type="EMBL" id="CP001463">
    <property type="protein sequence ID" value="ACS90841.1"/>
    <property type="molecule type" value="Genomic_DNA"/>
</dbReference>
<dbReference type="RefSeq" id="WP_015850057.1">
    <property type="nucleotide sequence ID" value="NC_012883.1"/>
</dbReference>
<dbReference type="SMR" id="C6A5E6"/>
<dbReference type="STRING" id="604354.TSIB_1790"/>
<dbReference type="GeneID" id="8096800"/>
<dbReference type="KEGG" id="tsi:TSIB_1790"/>
<dbReference type="eggNOG" id="arCOG04101">
    <property type="taxonomic scope" value="Archaea"/>
</dbReference>
<dbReference type="HOGENOM" id="CLU_069688_2_1_2"/>
<dbReference type="OrthoDB" id="117390at2157"/>
<dbReference type="Proteomes" id="UP000009079">
    <property type="component" value="Chromosome"/>
</dbReference>
<dbReference type="GO" id="GO:0005886">
    <property type="term" value="C:plasma membrane"/>
    <property type="evidence" value="ECO:0007669"/>
    <property type="project" value="UniProtKB-SubCell"/>
</dbReference>
<dbReference type="GO" id="GO:0005524">
    <property type="term" value="F:ATP binding"/>
    <property type="evidence" value="ECO:0007669"/>
    <property type="project" value="UniProtKB-UniRule"/>
</dbReference>
<dbReference type="GO" id="GO:0046933">
    <property type="term" value="F:proton-transporting ATP synthase activity, rotational mechanism"/>
    <property type="evidence" value="ECO:0007669"/>
    <property type="project" value="UniProtKB-UniRule"/>
</dbReference>
<dbReference type="GO" id="GO:0046961">
    <property type="term" value="F:proton-transporting ATPase activity, rotational mechanism"/>
    <property type="evidence" value="ECO:0007669"/>
    <property type="project" value="InterPro"/>
</dbReference>
<dbReference type="GO" id="GO:0042777">
    <property type="term" value="P:proton motive force-driven plasma membrane ATP synthesis"/>
    <property type="evidence" value="ECO:0007669"/>
    <property type="project" value="UniProtKB-UniRule"/>
</dbReference>
<dbReference type="FunFam" id="1.10.287.3240:FF:000007">
    <property type="entry name" value="V-type ATP synthase subunit D"/>
    <property type="match status" value="1"/>
</dbReference>
<dbReference type="Gene3D" id="1.10.287.3240">
    <property type="match status" value="1"/>
</dbReference>
<dbReference type="HAMAP" id="MF_00271">
    <property type="entry name" value="ATP_synth_D_arch"/>
    <property type="match status" value="1"/>
</dbReference>
<dbReference type="InterPro" id="IPR002699">
    <property type="entry name" value="V_ATPase_D"/>
</dbReference>
<dbReference type="NCBIfam" id="NF001545">
    <property type="entry name" value="PRK00373.1-4"/>
    <property type="match status" value="1"/>
</dbReference>
<dbReference type="NCBIfam" id="TIGR00309">
    <property type="entry name" value="V_ATPase_subD"/>
    <property type="match status" value="1"/>
</dbReference>
<dbReference type="PANTHER" id="PTHR11671">
    <property type="entry name" value="V-TYPE ATP SYNTHASE SUBUNIT D"/>
    <property type="match status" value="1"/>
</dbReference>
<dbReference type="Pfam" id="PF01813">
    <property type="entry name" value="ATP-synt_D"/>
    <property type="match status" value="1"/>
</dbReference>